<sequence>MTWQSDYSRDYEVKNHMECQNRSDKYIWSPHDAYFYKGLSELIVDIDRLIYLSLEKIRKDFVFINLSTDSLSEFINRDNEWLSAVKGKQVVLIAARKSEALANYWYYNSNIRGVVYAGLSRDIRKELAYVINGRFLRKDIKKDKITDREMEIIRMTAQGMQPKSIARIENCSVKTVYTHRRNAEAKLYSKIYKLVQ</sequence>
<reference key="1">
    <citation type="submission" date="2008-02" db="EMBL/GenBank/DDBJ databases">
        <title>Complete sequence of Escherichia coli C str. ATCC 8739.</title>
        <authorList>
            <person name="Copeland A."/>
            <person name="Lucas S."/>
            <person name="Lapidus A."/>
            <person name="Glavina del Rio T."/>
            <person name="Dalin E."/>
            <person name="Tice H."/>
            <person name="Bruce D."/>
            <person name="Goodwin L."/>
            <person name="Pitluck S."/>
            <person name="Kiss H."/>
            <person name="Brettin T."/>
            <person name="Detter J.C."/>
            <person name="Han C."/>
            <person name="Kuske C.R."/>
            <person name="Schmutz J."/>
            <person name="Larimer F."/>
            <person name="Land M."/>
            <person name="Hauser L."/>
            <person name="Kyrpides N."/>
            <person name="Mikhailova N."/>
            <person name="Ingram L."/>
            <person name="Richardson P."/>
        </authorList>
    </citation>
    <scope>NUCLEOTIDE SEQUENCE [LARGE SCALE GENOMIC DNA]</scope>
    <source>
        <strain>ATCC 8739 / DSM 1576 / NBRC 3972 / NCIMB 8545 / WDCM 00012 / Crooks</strain>
    </source>
</reference>
<organism>
    <name type="scientific">Escherichia coli (strain ATCC 8739 / DSM 1576 / NBRC 3972 / NCIMB 8545 / WDCM 00012 / Crooks)</name>
    <dbReference type="NCBI Taxonomy" id="481805"/>
    <lineage>
        <taxon>Bacteria</taxon>
        <taxon>Pseudomonadati</taxon>
        <taxon>Pseudomonadota</taxon>
        <taxon>Gammaproteobacteria</taxon>
        <taxon>Enterobacterales</taxon>
        <taxon>Enterobacteriaceae</taxon>
        <taxon>Escherichia</taxon>
    </lineage>
</organism>
<comment type="function">
    <text evidence="1">Part of the ecpRABCDE operon, which encodes the E.coli common pilus (ECP). ECP is found in both commensal and pathogenic strains and plays a dual role in early-stage biofilm development and host cell recognition. Positively regulates the expression of the ecp operon (By similarity).</text>
</comment>
<comment type="subcellular location">
    <subcellularLocation>
        <location evidence="3">Cytoplasm</location>
    </subcellularLocation>
</comment>
<comment type="induction">
    <text evidence="1">Negatively regulated by H-NS. Positively autoregulated. Also positively regulated by IHF (By similarity).</text>
</comment>
<comment type="similarity">
    <text evidence="3">Belongs to the EcpR/MatA family.</text>
</comment>
<comment type="sequence caution" evidence="3">
    <conflict type="erroneous initiation">
        <sequence resource="EMBL-CDS" id="ACA78946"/>
    </conflict>
</comment>
<dbReference type="EMBL" id="CP000946">
    <property type="protein sequence ID" value="ACA78946.1"/>
    <property type="status" value="ALT_INIT"/>
    <property type="molecule type" value="Genomic_DNA"/>
</dbReference>
<dbReference type="SMR" id="B1J0X8"/>
<dbReference type="KEGG" id="ecl:EcolC_3325"/>
<dbReference type="HOGENOM" id="CLU_128111_0_0_6"/>
<dbReference type="GO" id="GO:0005737">
    <property type="term" value="C:cytoplasm"/>
    <property type="evidence" value="ECO:0007669"/>
    <property type="project" value="UniProtKB-SubCell"/>
</dbReference>
<dbReference type="GO" id="GO:0003677">
    <property type="term" value="F:DNA binding"/>
    <property type="evidence" value="ECO:0007669"/>
    <property type="project" value="UniProtKB-KW"/>
</dbReference>
<dbReference type="GO" id="GO:0006355">
    <property type="term" value="P:regulation of DNA-templated transcription"/>
    <property type="evidence" value="ECO:0007669"/>
    <property type="project" value="InterPro"/>
</dbReference>
<dbReference type="CDD" id="cd06170">
    <property type="entry name" value="LuxR_C_like"/>
    <property type="match status" value="1"/>
</dbReference>
<dbReference type="Gene3D" id="1.10.10.10">
    <property type="entry name" value="Winged helix-like DNA-binding domain superfamily/Winged helix DNA-binding domain"/>
    <property type="match status" value="1"/>
</dbReference>
<dbReference type="InterPro" id="IPR016032">
    <property type="entry name" value="Sig_transdc_resp-reg_C-effctor"/>
</dbReference>
<dbReference type="InterPro" id="IPR000792">
    <property type="entry name" value="Tscrpt_reg_LuxR_C"/>
</dbReference>
<dbReference type="InterPro" id="IPR036388">
    <property type="entry name" value="WH-like_DNA-bd_sf"/>
</dbReference>
<dbReference type="Pfam" id="PF00196">
    <property type="entry name" value="GerE"/>
    <property type="match status" value="1"/>
</dbReference>
<dbReference type="PRINTS" id="PR00038">
    <property type="entry name" value="HTHLUXR"/>
</dbReference>
<dbReference type="SMART" id="SM00421">
    <property type="entry name" value="HTH_LUXR"/>
    <property type="match status" value="1"/>
</dbReference>
<dbReference type="SUPFAM" id="SSF46894">
    <property type="entry name" value="C-terminal effector domain of the bipartite response regulators"/>
    <property type="match status" value="1"/>
</dbReference>
<dbReference type="PROSITE" id="PS50043">
    <property type="entry name" value="HTH_LUXR_2"/>
    <property type="match status" value="1"/>
</dbReference>
<protein>
    <recommendedName>
        <fullName>HTH-type transcriptional regulator EcpR</fullName>
    </recommendedName>
</protein>
<keyword id="KW-0010">Activator</keyword>
<keyword id="KW-0963">Cytoplasm</keyword>
<keyword id="KW-0238">DNA-binding</keyword>
<keyword id="KW-0804">Transcription</keyword>
<keyword id="KW-0805">Transcription regulation</keyword>
<accession>B1J0X8</accession>
<gene>
    <name type="primary">ecpR</name>
    <name type="synonym">matA</name>
    <name type="ordered locus">EcolC_3325</name>
</gene>
<feature type="chain" id="PRO_0000369173" description="HTH-type transcriptional regulator EcpR">
    <location>
        <begin position="1"/>
        <end position="196"/>
    </location>
</feature>
<feature type="domain" description="HTH luxR-type" evidence="2">
    <location>
        <begin position="138"/>
        <end position="196"/>
    </location>
</feature>
<feature type="DNA-binding region" description="H-T-H motif" evidence="2">
    <location>
        <begin position="162"/>
        <end position="181"/>
    </location>
</feature>
<proteinExistence type="inferred from homology"/>
<name>ECPR_ECOLC</name>
<evidence type="ECO:0000250" key="1"/>
<evidence type="ECO:0000255" key="2">
    <source>
        <dbReference type="PROSITE-ProRule" id="PRU00411"/>
    </source>
</evidence>
<evidence type="ECO:0000305" key="3"/>